<protein>
    <recommendedName>
        <fullName evidence="10">Chromatin remodeling protein SHL</fullName>
    </recommendedName>
    <alternativeName>
        <fullName evidence="9">Protein SHORT LIFE</fullName>
    </alternativeName>
</protein>
<gene>
    <name evidence="9" type="primary">SHL</name>
    <name evidence="10" type="synonym">SHL1</name>
    <name evidence="11" type="ordered locus">At4g39100</name>
    <name evidence="12" type="ORF">F19H22.200</name>
</gene>
<organism>
    <name type="scientific">Arabidopsis thaliana</name>
    <name type="common">Mouse-ear cress</name>
    <dbReference type="NCBI Taxonomy" id="3702"/>
    <lineage>
        <taxon>Eukaryota</taxon>
        <taxon>Viridiplantae</taxon>
        <taxon>Streptophyta</taxon>
        <taxon>Embryophyta</taxon>
        <taxon>Tracheophyta</taxon>
        <taxon>Spermatophyta</taxon>
        <taxon>Magnoliopsida</taxon>
        <taxon>eudicotyledons</taxon>
        <taxon>Gunneridae</taxon>
        <taxon>Pentapetalae</taxon>
        <taxon>rosids</taxon>
        <taxon>malvids</taxon>
        <taxon>Brassicales</taxon>
        <taxon>Brassicaceae</taxon>
        <taxon>Camelineae</taxon>
        <taxon>Arabidopsis</taxon>
    </lineage>
</organism>
<feature type="chain" id="PRO_0000434826" description="Chromatin remodeling protein SHL">
    <location>
        <begin position="1"/>
        <end position="228"/>
    </location>
</feature>
<feature type="domain" description="BAH" evidence="2">
    <location>
        <begin position="21"/>
        <end position="137"/>
    </location>
</feature>
<feature type="zinc finger region" description="PHD-type" evidence="1">
    <location>
        <begin position="139"/>
        <end position="190"/>
    </location>
</feature>
<feature type="region of interest" description="Disordered" evidence="4">
    <location>
        <begin position="191"/>
        <end position="228"/>
    </location>
</feature>
<feature type="short sequence motif" description="Nuclear localization signal" evidence="3">
    <location>
        <begin position="210"/>
        <end position="217"/>
    </location>
</feature>
<feature type="compositionally biased region" description="Polar residues" evidence="4">
    <location>
        <begin position="191"/>
        <end position="203"/>
    </location>
</feature>
<feature type="compositionally biased region" description="Basic and acidic residues" evidence="4">
    <location>
        <begin position="204"/>
        <end position="218"/>
    </location>
</feature>
<feature type="compositionally biased region" description="Basic residues" evidence="4">
    <location>
        <begin position="219"/>
        <end position="228"/>
    </location>
</feature>
<feature type="mutagenesis site" description="Impaired H3K4me2/3 binding." evidence="7">
    <original>W</original>
    <variation>A</variation>
    <location>
        <position position="163"/>
    </location>
</feature>
<feature type="sequence conflict" description="In Ref. 5; AAM66132." evidence="10" ref="5">
    <original>S</original>
    <variation>T</variation>
    <location>
        <position position="107"/>
    </location>
</feature>
<name>SHL_ARATH</name>
<dbReference type="EMBL" id="AF277453">
    <property type="protein sequence ID" value="AAG21353.1"/>
    <property type="molecule type" value="mRNA"/>
</dbReference>
<dbReference type="EMBL" id="AL035679">
    <property type="protein sequence ID" value="CAB38830.1"/>
    <property type="status" value="ALT_SEQ"/>
    <property type="molecule type" value="Genomic_DNA"/>
</dbReference>
<dbReference type="EMBL" id="AL161594">
    <property type="protein sequence ID" value="CAB80573.1"/>
    <property type="status" value="ALT_SEQ"/>
    <property type="molecule type" value="Genomic_DNA"/>
</dbReference>
<dbReference type="EMBL" id="CP002687">
    <property type="protein sequence ID" value="AEE87017.1"/>
    <property type="molecule type" value="Genomic_DNA"/>
</dbReference>
<dbReference type="EMBL" id="AY050934">
    <property type="protein sequence ID" value="AAK93611.1"/>
    <property type="molecule type" value="mRNA"/>
</dbReference>
<dbReference type="EMBL" id="AY079396">
    <property type="protein sequence ID" value="AAL85127.1"/>
    <property type="molecule type" value="mRNA"/>
</dbReference>
<dbReference type="EMBL" id="AY088603">
    <property type="protein sequence ID" value="AAM66132.1"/>
    <property type="molecule type" value="mRNA"/>
</dbReference>
<dbReference type="PIR" id="H85462">
    <property type="entry name" value="H85462"/>
</dbReference>
<dbReference type="PIR" id="T06070">
    <property type="entry name" value="T06070"/>
</dbReference>
<dbReference type="RefSeq" id="NP_568053.1">
    <molecule id="Q9FEN9-1"/>
    <property type="nucleotide sequence ID" value="NM_120070.3"/>
</dbReference>
<dbReference type="SMR" id="Q9FEN9"/>
<dbReference type="FunCoup" id="Q9FEN9">
    <property type="interactions" value="47"/>
</dbReference>
<dbReference type="IntAct" id="Q9FEN9">
    <property type="interactions" value="7"/>
</dbReference>
<dbReference type="STRING" id="3702.Q9FEN9"/>
<dbReference type="iPTMnet" id="Q9FEN9"/>
<dbReference type="PaxDb" id="3702-AT4G39100.1"/>
<dbReference type="ProteomicsDB" id="232678">
    <molecule id="Q9FEN9-1"/>
</dbReference>
<dbReference type="EnsemblPlants" id="AT4G39100.1">
    <molecule id="Q9FEN9-1"/>
    <property type="protein sequence ID" value="AT4G39100.1"/>
    <property type="gene ID" value="AT4G39100"/>
</dbReference>
<dbReference type="GeneID" id="830065"/>
<dbReference type="Gramene" id="AT4G39100.1">
    <molecule id="Q9FEN9-1"/>
    <property type="protein sequence ID" value="AT4G39100.1"/>
    <property type="gene ID" value="AT4G39100"/>
</dbReference>
<dbReference type="KEGG" id="ath:AT4G39100"/>
<dbReference type="Araport" id="AT4G39100"/>
<dbReference type="TAIR" id="AT4G39100">
    <property type="gene designation" value="SHL"/>
</dbReference>
<dbReference type="eggNOG" id="KOG1632">
    <property type="taxonomic scope" value="Eukaryota"/>
</dbReference>
<dbReference type="eggNOG" id="KOG1886">
    <property type="taxonomic scope" value="Eukaryota"/>
</dbReference>
<dbReference type="InParanoid" id="Q9FEN9"/>
<dbReference type="OMA" id="KFICLCE"/>
<dbReference type="PhylomeDB" id="Q9FEN9"/>
<dbReference type="PRO" id="PR:Q9FEN9"/>
<dbReference type="Proteomes" id="UP000006548">
    <property type="component" value="Chromosome 4"/>
</dbReference>
<dbReference type="ExpressionAtlas" id="Q9FEN9">
    <property type="expression patterns" value="baseline and differential"/>
</dbReference>
<dbReference type="GO" id="GO:0005634">
    <property type="term" value="C:nucleus"/>
    <property type="evidence" value="ECO:0000314"/>
    <property type="project" value="TAIR"/>
</dbReference>
<dbReference type="GO" id="GO:0003682">
    <property type="term" value="F:chromatin binding"/>
    <property type="evidence" value="ECO:0007669"/>
    <property type="project" value="InterPro"/>
</dbReference>
<dbReference type="GO" id="GO:0003700">
    <property type="term" value="F:DNA-binding transcription factor activity"/>
    <property type="evidence" value="ECO:0000250"/>
    <property type="project" value="TAIR"/>
</dbReference>
<dbReference type="GO" id="GO:0140002">
    <property type="term" value="F:histone H3K4me3 reader activity"/>
    <property type="evidence" value="ECO:0000314"/>
    <property type="project" value="UniProtKB"/>
</dbReference>
<dbReference type="GO" id="GO:0035064">
    <property type="term" value="F:methylated histone binding"/>
    <property type="evidence" value="ECO:0000314"/>
    <property type="project" value="TAIR"/>
</dbReference>
<dbReference type="GO" id="GO:0000976">
    <property type="term" value="F:transcription cis-regulatory region binding"/>
    <property type="evidence" value="ECO:0000314"/>
    <property type="project" value="UniProtKB"/>
</dbReference>
<dbReference type="GO" id="GO:0008270">
    <property type="term" value="F:zinc ion binding"/>
    <property type="evidence" value="ECO:0007669"/>
    <property type="project" value="UniProtKB-KW"/>
</dbReference>
<dbReference type="GO" id="GO:0009908">
    <property type="term" value="P:flower development"/>
    <property type="evidence" value="ECO:0007669"/>
    <property type="project" value="UniProtKB-KW"/>
</dbReference>
<dbReference type="GO" id="GO:0045814">
    <property type="term" value="P:negative regulation of gene expression, epigenetic"/>
    <property type="evidence" value="ECO:0000315"/>
    <property type="project" value="UniProtKB"/>
</dbReference>
<dbReference type="GO" id="GO:0009791">
    <property type="term" value="P:post-embryonic development"/>
    <property type="evidence" value="ECO:0000315"/>
    <property type="project" value="UniProtKB"/>
</dbReference>
<dbReference type="GO" id="GO:2000028">
    <property type="term" value="P:regulation of photoperiodism, flowering"/>
    <property type="evidence" value="ECO:0000315"/>
    <property type="project" value="UniProtKB"/>
</dbReference>
<dbReference type="GO" id="GO:0010228">
    <property type="term" value="P:vegetative to reproductive phase transition of meristem"/>
    <property type="evidence" value="ECO:0000315"/>
    <property type="project" value="TAIR"/>
</dbReference>
<dbReference type="FunFam" id="3.30.40.10:FF:000561">
    <property type="entry name" value="Bromo-adjacent homology (BAH) domain-containing protein"/>
    <property type="match status" value="1"/>
</dbReference>
<dbReference type="FunFam" id="2.30.30.490:FF:000019">
    <property type="entry name" value="Chromatin remodeling protein EBS"/>
    <property type="match status" value="1"/>
</dbReference>
<dbReference type="Gene3D" id="2.30.30.490">
    <property type="match status" value="1"/>
</dbReference>
<dbReference type="Gene3D" id="3.30.40.10">
    <property type="entry name" value="Zinc/RING finger domain, C3HC4 (zinc finger)"/>
    <property type="match status" value="1"/>
</dbReference>
<dbReference type="InterPro" id="IPR001025">
    <property type="entry name" value="BAH_dom"/>
</dbReference>
<dbReference type="InterPro" id="IPR043151">
    <property type="entry name" value="BAH_sf"/>
</dbReference>
<dbReference type="InterPro" id="IPR019786">
    <property type="entry name" value="Zinc_finger_PHD-type_CS"/>
</dbReference>
<dbReference type="InterPro" id="IPR011011">
    <property type="entry name" value="Znf_FYVE_PHD"/>
</dbReference>
<dbReference type="InterPro" id="IPR001965">
    <property type="entry name" value="Znf_PHD"/>
</dbReference>
<dbReference type="InterPro" id="IPR019787">
    <property type="entry name" value="Znf_PHD-finger"/>
</dbReference>
<dbReference type="InterPro" id="IPR013083">
    <property type="entry name" value="Znf_RING/FYVE/PHD"/>
</dbReference>
<dbReference type="PANTHER" id="PTHR46364">
    <property type="entry name" value="OS08G0421900 PROTEIN"/>
    <property type="match status" value="1"/>
</dbReference>
<dbReference type="Pfam" id="PF01426">
    <property type="entry name" value="BAH"/>
    <property type="match status" value="1"/>
</dbReference>
<dbReference type="Pfam" id="PF00628">
    <property type="entry name" value="PHD"/>
    <property type="match status" value="1"/>
</dbReference>
<dbReference type="SMART" id="SM00439">
    <property type="entry name" value="BAH"/>
    <property type="match status" value="1"/>
</dbReference>
<dbReference type="SMART" id="SM00249">
    <property type="entry name" value="PHD"/>
    <property type="match status" value="1"/>
</dbReference>
<dbReference type="SUPFAM" id="SSF57903">
    <property type="entry name" value="FYVE/PHD zinc finger"/>
    <property type="match status" value="1"/>
</dbReference>
<dbReference type="PROSITE" id="PS51038">
    <property type="entry name" value="BAH"/>
    <property type="match status" value="1"/>
</dbReference>
<dbReference type="PROSITE" id="PS01359">
    <property type="entry name" value="ZF_PHD_1"/>
    <property type="match status" value="1"/>
</dbReference>
<dbReference type="PROSITE" id="PS50016">
    <property type="entry name" value="ZF_PHD_2"/>
    <property type="match status" value="1"/>
</dbReference>
<accession>Q9FEN9</accession>
<accession>Q8L975</accession>
<accession>Q9SVI4</accession>
<keyword id="KW-0025">Alternative splicing</keyword>
<keyword id="KW-0156">Chromatin regulator</keyword>
<keyword id="KW-0287">Flowering</keyword>
<keyword id="KW-0479">Metal-binding</keyword>
<keyword id="KW-0539">Nucleus</keyword>
<keyword id="KW-1185">Reference proteome</keyword>
<keyword id="KW-0804">Transcription</keyword>
<keyword id="KW-0805">Transcription regulation</keyword>
<keyword id="KW-0862">Zinc</keyword>
<keyword id="KW-0863">Zinc-finger</keyword>
<comment type="function">
    <text evidence="5 6 7">Chromatin remodeling factor that binds to methylated histone (e.g. H3K4me2/3) to prevent their acetylation (e.g. H3K9K14Ac), likely by recruiting histone deacetylase (HDAC) complexes, and thus regulate the transcription of target genes (PubMed:25281686). Required during development and for fertility, probably by modulating developmental gene expression (PubMed:11129039, PubMed:15082927, PubMed:25281686). Promotes development speed, but at fitness cost (PubMed:11129039). Involved in the chromatin-mediated repression of floral initiation and controls genes regulating flowering. Negatively regulates the expression of the floral integrator SOC1, by preventing high levels of H3 acetylation, thus maintaining an inactive chromatin conformation (PubMed:25281686).</text>
</comment>
<comment type="subunit">
    <text evidence="7 8">Recognizes di- and trimethylated histone H3 at lysine 4 (PubMed:25281686). Interacts with HDA6 (PubMed:25281686). Interacts with DEK3 (PubMed:25387881).</text>
</comment>
<comment type="interaction">
    <interactant intactId="EBI-4458733">
        <id>Q9FEN9</id>
    </interactant>
    <interactant intactId="EBI-15200822">
        <id>Q8VZJ1-1</id>
        <label>ATXR5</label>
    </interactant>
    <organismsDiffer>false</organismsDiffer>
    <experiments>3</experiments>
</comment>
<comment type="subcellular location">
    <subcellularLocation>
        <location evidence="3 5">Nucleus</location>
    </subcellularLocation>
</comment>
<comment type="alternative products">
    <event type="alternative splicing"/>
    <isoform>
        <id>Q9FEN9-1</id>
        <name>1</name>
        <sequence type="displayed"/>
    </isoform>
    <text evidence="10">Additional isoforms may exist.</text>
</comment>
<comment type="tissue specificity">
    <text evidence="5 7">Expressed ubiquitously (PubMed:25281686). Mostly expressed in roots, stems, leaves and flowers, and, to a lower extent, in siliques (PubMed:11129039).</text>
</comment>
<comment type="developmental stage">
    <text evidence="5 7">Expressed at all stages of development, from seedlings to adult reproductive phase.</text>
</comment>
<comment type="disruption phenotype">
    <text evidence="5 7">In antisense plants, dwarf phenotype characterized by stunted axis, dark-green leaves, compact rosette structure, less small leaves, fewer flowers and seeds, and associated with a delayed development and late flowering (PubMed:11129039). In shl-2, acceleration of flowering, especially in short-days (SD), associated with a shorter adult vegetative phase. Other developmental defects include premature senescence, smaller leaves and siliques. Higher H3K9K14 acetylation in the genomic region of the SOC1 locus (PubMed:25281686).</text>
</comment>
<comment type="similarity">
    <text evidence="10">Belongs to the SHL1/EBS protein family.</text>
</comment>
<comment type="sequence caution" evidence="10">
    <conflict type="erroneous gene model prediction">
        <sequence resource="EMBL-CDS" id="CAB38830"/>
    </conflict>
</comment>
<comment type="sequence caution" evidence="10">
    <conflict type="erroneous gene model prediction">
        <sequence resource="EMBL-CDS" id="CAB80573"/>
    </conflict>
</comment>
<evidence type="ECO:0000255" key="1">
    <source>
        <dbReference type="PROSITE-ProRule" id="PRU00146"/>
    </source>
</evidence>
<evidence type="ECO:0000255" key="2">
    <source>
        <dbReference type="PROSITE-ProRule" id="PRU00370"/>
    </source>
</evidence>
<evidence type="ECO:0000255" key="3">
    <source>
        <dbReference type="PROSITE-ProRule" id="PRU00768"/>
    </source>
</evidence>
<evidence type="ECO:0000256" key="4">
    <source>
        <dbReference type="SAM" id="MobiDB-lite"/>
    </source>
</evidence>
<evidence type="ECO:0000269" key="5">
    <source>
    </source>
</evidence>
<evidence type="ECO:0000269" key="6">
    <source>
    </source>
</evidence>
<evidence type="ECO:0000269" key="7">
    <source>
    </source>
</evidence>
<evidence type="ECO:0000269" key="8">
    <source>
    </source>
</evidence>
<evidence type="ECO:0000303" key="9">
    <source>
    </source>
</evidence>
<evidence type="ECO:0000305" key="10"/>
<evidence type="ECO:0000312" key="11">
    <source>
        <dbReference type="EMBL" id="AEE87017.1"/>
    </source>
</evidence>
<evidence type="ECO:0000312" key="12">
    <source>
        <dbReference type="EMBL" id="CAB38830.1"/>
    </source>
</evidence>
<reference key="1">
    <citation type="journal article" date="2000" name="Mol. Gen. Genet.">
        <title>The Arabidopsis PHD-finger protein SHL is required for proper development and fertility.</title>
        <authorList>
            <person name="Muessig C."/>
            <person name="Kauschmann A."/>
            <person name="Clouse S.D."/>
            <person name="Altmann T."/>
        </authorList>
    </citation>
    <scope>NUCLEOTIDE SEQUENCE [MRNA]</scope>
    <scope>FUNCTION</scope>
    <scope>DISRUPTION PHENOTYPE</scope>
    <scope>SUBCELLULAR LOCATION</scope>
    <scope>TISSUE SPECIFICITY</scope>
    <scope>DEVELOPMENTAL STAGE</scope>
    <source>
        <strain>cv. C24</strain>
    </source>
</reference>
<reference key="2">
    <citation type="journal article" date="1999" name="Nature">
        <title>Sequence and analysis of chromosome 4 of the plant Arabidopsis thaliana.</title>
        <authorList>
            <person name="Mayer K.F.X."/>
            <person name="Schueller C."/>
            <person name="Wambutt R."/>
            <person name="Murphy G."/>
            <person name="Volckaert G."/>
            <person name="Pohl T."/>
            <person name="Duesterhoeft A."/>
            <person name="Stiekema W."/>
            <person name="Entian K.-D."/>
            <person name="Terryn N."/>
            <person name="Harris B."/>
            <person name="Ansorge W."/>
            <person name="Brandt P."/>
            <person name="Grivell L.A."/>
            <person name="Rieger M."/>
            <person name="Weichselgartner M."/>
            <person name="de Simone V."/>
            <person name="Obermaier B."/>
            <person name="Mache R."/>
            <person name="Mueller M."/>
            <person name="Kreis M."/>
            <person name="Delseny M."/>
            <person name="Puigdomenech P."/>
            <person name="Watson M."/>
            <person name="Schmidtheini T."/>
            <person name="Reichert B."/>
            <person name="Portetelle D."/>
            <person name="Perez-Alonso M."/>
            <person name="Boutry M."/>
            <person name="Bancroft I."/>
            <person name="Vos P."/>
            <person name="Hoheisel J."/>
            <person name="Zimmermann W."/>
            <person name="Wedler H."/>
            <person name="Ridley P."/>
            <person name="Langham S.-A."/>
            <person name="McCullagh B."/>
            <person name="Bilham L."/>
            <person name="Robben J."/>
            <person name="van der Schueren J."/>
            <person name="Grymonprez B."/>
            <person name="Chuang Y.-J."/>
            <person name="Vandenbussche F."/>
            <person name="Braeken M."/>
            <person name="Weltjens I."/>
            <person name="Voet M."/>
            <person name="Bastiaens I."/>
            <person name="Aert R."/>
            <person name="Defoor E."/>
            <person name="Weitzenegger T."/>
            <person name="Bothe G."/>
            <person name="Ramsperger U."/>
            <person name="Hilbert H."/>
            <person name="Braun M."/>
            <person name="Holzer E."/>
            <person name="Brandt A."/>
            <person name="Peters S."/>
            <person name="van Staveren M."/>
            <person name="Dirkse W."/>
            <person name="Mooijman P."/>
            <person name="Klein Lankhorst R."/>
            <person name="Rose M."/>
            <person name="Hauf J."/>
            <person name="Koetter P."/>
            <person name="Berneiser S."/>
            <person name="Hempel S."/>
            <person name="Feldpausch M."/>
            <person name="Lamberth S."/>
            <person name="Van den Daele H."/>
            <person name="De Keyser A."/>
            <person name="Buysshaert C."/>
            <person name="Gielen J."/>
            <person name="Villarroel R."/>
            <person name="De Clercq R."/>
            <person name="van Montagu M."/>
            <person name="Rogers J."/>
            <person name="Cronin A."/>
            <person name="Quail M.A."/>
            <person name="Bray-Allen S."/>
            <person name="Clark L."/>
            <person name="Doggett J."/>
            <person name="Hall S."/>
            <person name="Kay M."/>
            <person name="Lennard N."/>
            <person name="McLay K."/>
            <person name="Mayes R."/>
            <person name="Pettett A."/>
            <person name="Rajandream M.A."/>
            <person name="Lyne M."/>
            <person name="Benes V."/>
            <person name="Rechmann S."/>
            <person name="Borkova D."/>
            <person name="Bloecker H."/>
            <person name="Scharfe M."/>
            <person name="Grimm M."/>
            <person name="Loehnert T.-H."/>
            <person name="Dose S."/>
            <person name="de Haan M."/>
            <person name="Maarse A.C."/>
            <person name="Schaefer M."/>
            <person name="Mueller-Auer S."/>
            <person name="Gabel C."/>
            <person name="Fuchs M."/>
            <person name="Fartmann B."/>
            <person name="Granderath K."/>
            <person name="Dauner D."/>
            <person name="Herzl A."/>
            <person name="Neumann S."/>
            <person name="Argiriou A."/>
            <person name="Vitale D."/>
            <person name="Liguori R."/>
            <person name="Piravandi E."/>
            <person name="Massenet O."/>
            <person name="Quigley F."/>
            <person name="Clabauld G."/>
            <person name="Muendlein A."/>
            <person name="Felber R."/>
            <person name="Schnabl S."/>
            <person name="Hiller R."/>
            <person name="Schmidt W."/>
            <person name="Lecharny A."/>
            <person name="Aubourg S."/>
            <person name="Chefdor F."/>
            <person name="Cooke R."/>
            <person name="Berger C."/>
            <person name="Monfort A."/>
            <person name="Casacuberta E."/>
            <person name="Gibbons T."/>
            <person name="Weber N."/>
            <person name="Vandenbol M."/>
            <person name="Bargues M."/>
            <person name="Terol J."/>
            <person name="Torres A."/>
            <person name="Perez-Perez A."/>
            <person name="Purnelle B."/>
            <person name="Bent E."/>
            <person name="Johnson S."/>
            <person name="Tacon D."/>
            <person name="Jesse T."/>
            <person name="Heijnen L."/>
            <person name="Schwarz S."/>
            <person name="Scholler P."/>
            <person name="Heber S."/>
            <person name="Francs P."/>
            <person name="Bielke C."/>
            <person name="Frishman D."/>
            <person name="Haase D."/>
            <person name="Lemcke K."/>
            <person name="Mewes H.-W."/>
            <person name="Stocker S."/>
            <person name="Zaccaria P."/>
            <person name="Bevan M."/>
            <person name="Wilson R.K."/>
            <person name="de la Bastide M."/>
            <person name="Habermann K."/>
            <person name="Parnell L."/>
            <person name="Dedhia N."/>
            <person name="Gnoj L."/>
            <person name="Schutz K."/>
            <person name="Huang E."/>
            <person name="Spiegel L."/>
            <person name="Sekhon M."/>
            <person name="Murray J."/>
            <person name="Sheet P."/>
            <person name="Cordes M."/>
            <person name="Abu-Threideh J."/>
            <person name="Stoneking T."/>
            <person name="Kalicki J."/>
            <person name="Graves T."/>
            <person name="Harmon G."/>
            <person name="Edwards J."/>
            <person name="Latreille P."/>
            <person name="Courtney L."/>
            <person name="Cloud J."/>
            <person name="Abbott A."/>
            <person name="Scott K."/>
            <person name="Johnson D."/>
            <person name="Minx P."/>
            <person name="Bentley D."/>
            <person name="Fulton B."/>
            <person name="Miller N."/>
            <person name="Greco T."/>
            <person name="Kemp K."/>
            <person name="Kramer J."/>
            <person name="Fulton L."/>
            <person name="Mardis E."/>
            <person name="Dante M."/>
            <person name="Pepin K."/>
            <person name="Hillier L.W."/>
            <person name="Nelson J."/>
            <person name="Spieth J."/>
            <person name="Ryan E."/>
            <person name="Andrews S."/>
            <person name="Geisel C."/>
            <person name="Layman D."/>
            <person name="Du H."/>
            <person name="Ali J."/>
            <person name="Berghoff A."/>
            <person name="Jones K."/>
            <person name="Drone K."/>
            <person name="Cotton M."/>
            <person name="Joshu C."/>
            <person name="Antonoiu B."/>
            <person name="Zidanic M."/>
            <person name="Strong C."/>
            <person name="Sun H."/>
            <person name="Lamar B."/>
            <person name="Yordan C."/>
            <person name="Ma P."/>
            <person name="Zhong J."/>
            <person name="Preston R."/>
            <person name="Vil D."/>
            <person name="Shekher M."/>
            <person name="Matero A."/>
            <person name="Shah R."/>
            <person name="Swaby I.K."/>
            <person name="O'Shaughnessy A."/>
            <person name="Rodriguez M."/>
            <person name="Hoffman J."/>
            <person name="Till S."/>
            <person name="Granat S."/>
            <person name="Shohdy N."/>
            <person name="Hasegawa A."/>
            <person name="Hameed A."/>
            <person name="Lodhi M."/>
            <person name="Johnson A."/>
            <person name="Chen E."/>
            <person name="Marra M.A."/>
            <person name="Martienssen R."/>
            <person name="McCombie W.R."/>
        </authorList>
    </citation>
    <scope>NUCLEOTIDE SEQUENCE [LARGE SCALE GENOMIC DNA]</scope>
    <source>
        <strain>cv. Columbia</strain>
    </source>
</reference>
<reference key="3">
    <citation type="journal article" date="2017" name="Plant J.">
        <title>Araport11: a complete reannotation of the Arabidopsis thaliana reference genome.</title>
        <authorList>
            <person name="Cheng C.Y."/>
            <person name="Krishnakumar V."/>
            <person name="Chan A.P."/>
            <person name="Thibaud-Nissen F."/>
            <person name="Schobel S."/>
            <person name="Town C.D."/>
        </authorList>
    </citation>
    <scope>GENOME REANNOTATION</scope>
    <source>
        <strain>cv. Columbia</strain>
    </source>
</reference>
<reference key="4">
    <citation type="journal article" date="2003" name="Science">
        <title>Empirical analysis of transcriptional activity in the Arabidopsis genome.</title>
        <authorList>
            <person name="Yamada K."/>
            <person name="Lim J."/>
            <person name="Dale J.M."/>
            <person name="Chen H."/>
            <person name="Shinn P."/>
            <person name="Palm C.J."/>
            <person name="Southwick A.M."/>
            <person name="Wu H.C."/>
            <person name="Kim C.J."/>
            <person name="Nguyen M."/>
            <person name="Pham P.K."/>
            <person name="Cheuk R.F."/>
            <person name="Karlin-Newmann G."/>
            <person name="Liu S.X."/>
            <person name="Lam B."/>
            <person name="Sakano H."/>
            <person name="Wu T."/>
            <person name="Yu G."/>
            <person name="Miranda M."/>
            <person name="Quach H.L."/>
            <person name="Tripp M."/>
            <person name="Chang C.H."/>
            <person name="Lee J.M."/>
            <person name="Toriumi M.J."/>
            <person name="Chan M.M."/>
            <person name="Tang C.C."/>
            <person name="Onodera C.S."/>
            <person name="Deng J.M."/>
            <person name="Akiyama K."/>
            <person name="Ansari Y."/>
            <person name="Arakawa T."/>
            <person name="Banh J."/>
            <person name="Banno F."/>
            <person name="Bowser L."/>
            <person name="Brooks S.Y."/>
            <person name="Carninci P."/>
            <person name="Chao Q."/>
            <person name="Choy N."/>
            <person name="Enju A."/>
            <person name="Goldsmith A.D."/>
            <person name="Gurjal M."/>
            <person name="Hansen N.F."/>
            <person name="Hayashizaki Y."/>
            <person name="Johnson-Hopson C."/>
            <person name="Hsuan V.W."/>
            <person name="Iida K."/>
            <person name="Karnes M."/>
            <person name="Khan S."/>
            <person name="Koesema E."/>
            <person name="Ishida J."/>
            <person name="Jiang P.X."/>
            <person name="Jones T."/>
            <person name="Kawai J."/>
            <person name="Kamiya A."/>
            <person name="Meyers C."/>
            <person name="Nakajima M."/>
            <person name="Narusaka M."/>
            <person name="Seki M."/>
            <person name="Sakurai T."/>
            <person name="Satou M."/>
            <person name="Tamse R."/>
            <person name="Vaysberg M."/>
            <person name="Wallender E.K."/>
            <person name="Wong C."/>
            <person name="Yamamura Y."/>
            <person name="Yuan S."/>
            <person name="Shinozaki K."/>
            <person name="Davis R.W."/>
            <person name="Theologis A."/>
            <person name="Ecker J.R."/>
        </authorList>
    </citation>
    <scope>NUCLEOTIDE SEQUENCE [LARGE SCALE MRNA]</scope>
    <source>
        <strain>cv. Columbia</strain>
    </source>
</reference>
<reference key="5">
    <citation type="submission" date="2002-03" db="EMBL/GenBank/DDBJ databases">
        <title>Full-length cDNA from Arabidopsis thaliana.</title>
        <authorList>
            <person name="Brover V.V."/>
            <person name="Troukhan M.E."/>
            <person name="Alexandrov N.A."/>
            <person name="Lu Y.-P."/>
            <person name="Flavell R.B."/>
            <person name="Feldmann K.A."/>
        </authorList>
    </citation>
    <scope>NUCLEOTIDE SEQUENCE [LARGE SCALE MRNA]</scope>
</reference>
<reference key="6">
    <citation type="journal article" date="2003" name="Plant Mol. Biol.">
        <title>Changes in gene expression in response to altered SHL transcript levels.</title>
        <authorList>
            <person name="Muessig C."/>
            <person name="Altmann T."/>
        </authorList>
    </citation>
    <scope>FUNCTION</scope>
</reference>
<reference key="7">
    <citation type="journal article" date="2014" name="Plant Cell">
        <title>Chromatin-dependent repression of the Arabidopsis floral integrator genes involves plant specific PHD-containing proteins.</title>
        <authorList>
            <person name="Lopez-Gonzalez L."/>
            <person name="Mouriz A."/>
            <person name="Narro-Diego L."/>
            <person name="Bustos R."/>
            <person name="Martinez-Zapater J.M."/>
            <person name="Jarillo J.A."/>
            <person name="Pineiro M."/>
        </authorList>
    </citation>
    <scope>FUNCTION</scope>
    <scope>MUTAGENESIS OF TRP-163</scope>
    <scope>DISRUPTION PHENOTYPE</scope>
    <scope>INTERACTION WITH HISTONE AND HDA6</scope>
    <scope>TISSUE SPECIFICITY</scope>
    <scope>DEVELOPMENTAL STAGE</scope>
    <source>
        <strain>cv. Columbia</strain>
        <strain>cv. Landsberg erecta</strain>
    </source>
</reference>
<reference key="8">
    <citation type="journal article" date="2014" name="Plant Cell">
        <title>A DEK domain-containing protein modulates chromatin structure and function in Arabidopsis.</title>
        <authorList>
            <person name="Waidmann S."/>
            <person name="Kusenda B."/>
            <person name="Mayerhofer J."/>
            <person name="Mechtler K."/>
            <person name="Jonak C."/>
        </authorList>
    </citation>
    <scope>INTERACTION WITH DEK3</scope>
    <scope>IDENTIFICATION BY MASS SPECTROMETRY</scope>
    <source>
        <strain>cv. Columbia</strain>
    </source>
</reference>
<proteinExistence type="evidence at protein level"/>
<sequence>MPKQKAPRKQLKSYKLKHINKSIQEGDAVLMRSSEPGKPSYVARVEAIETDARGSHAKVRVRWYYRPEESIGGRRQFHGAKEVFLSDHFDFQSADTIEGKCKVHSFSSYTKLDSVGNDDFFCRFEYNSTTGAFDPDRVTVFCKCEMPYNPDDLMVQCEECSEWFHPSCIGTTIEEAKKPDNFYCEECSPQQQNLHNSNSTSNNRDAKVNGKRSLEVTKSKNKHTKRPG</sequence>